<feature type="chain" id="PRO_1000004892" description="Peptide chain release factor 1">
    <location>
        <begin position="1"/>
        <end position="361"/>
    </location>
</feature>
<feature type="region of interest" description="Disordered" evidence="2">
    <location>
        <begin position="287"/>
        <end position="313"/>
    </location>
</feature>
<feature type="compositionally biased region" description="Basic and acidic residues" evidence="2">
    <location>
        <begin position="287"/>
        <end position="297"/>
    </location>
</feature>
<feature type="modified residue" description="N5-methylglutamine" evidence="1">
    <location>
        <position position="237"/>
    </location>
</feature>
<organism>
    <name type="scientific">Francisella tularensis subsp. novicida (strain U112)</name>
    <dbReference type="NCBI Taxonomy" id="401614"/>
    <lineage>
        <taxon>Bacteria</taxon>
        <taxon>Pseudomonadati</taxon>
        <taxon>Pseudomonadota</taxon>
        <taxon>Gammaproteobacteria</taxon>
        <taxon>Thiotrichales</taxon>
        <taxon>Francisellaceae</taxon>
        <taxon>Francisella</taxon>
    </lineage>
</organism>
<name>RF1_FRATN</name>
<reference key="1">
    <citation type="journal article" date="2007" name="Genome Biol.">
        <title>Comparison of Francisella tularensis genomes reveals evolutionary events associated with the emergence of human pathogenic strains.</title>
        <authorList>
            <person name="Rohmer L."/>
            <person name="Fong C."/>
            <person name="Abmayr S."/>
            <person name="Wasnick M."/>
            <person name="Larson Freeman T.J."/>
            <person name="Radey M."/>
            <person name="Guina T."/>
            <person name="Svensson K."/>
            <person name="Hayden H.S."/>
            <person name="Jacobs M."/>
            <person name="Gallagher L.A."/>
            <person name="Manoil C."/>
            <person name="Ernst R.K."/>
            <person name="Drees B."/>
            <person name="Buckley D."/>
            <person name="Haugen E."/>
            <person name="Bovee D."/>
            <person name="Zhou Y."/>
            <person name="Chang J."/>
            <person name="Levy R."/>
            <person name="Lim R."/>
            <person name="Gillett W."/>
            <person name="Guenthener D."/>
            <person name="Kang A."/>
            <person name="Shaffer S.A."/>
            <person name="Taylor G."/>
            <person name="Chen J."/>
            <person name="Gallis B."/>
            <person name="D'Argenio D.A."/>
            <person name="Forsman M."/>
            <person name="Olson M.V."/>
            <person name="Goodlett D.R."/>
            <person name="Kaul R."/>
            <person name="Miller S.I."/>
            <person name="Brittnacher M.J."/>
        </authorList>
    </citation>
    <scope>NUCLEOTIDE SEQUENCE [LARGE SCALE GENOMIC DNA]</scope>
    <source>
        <strain>U112</strain>
    </source>
</reference>
<evidence type="ECO:0000255" key="1">
    <source>
        <dbReference type="HAMAP-Rule" id="MF_00093"/>
    </source>
</evidence>
<evidence type="ECO:0000256" key="2">
    <source>
        <dbReference type="SAM" id="MobiDB-lite"/>
    </source>
</evidence>
<keyword id="KW-0963">Cytoplasm</keyword>
<keyword id="KW-0488">Methylation</keyword>
<keyword id="KW-0648">Protein biosynthesis</keyword>
<proteinExistence type="inferred from homology"/>
<accession>A0Q844</accession>
<sequence length="361" mass="40394">MKDSIKAKLQSLIERHEEVSALLSEAGIISDQNKFRDLSKEYSHLEPIVKAFKEYTQALEDKQAAYEMLNEKDAELVEMAKEELKLANEAIEKLESELQILLLPRDPNDDANVFLEIRAGTGGDEASIFSGDLFKMYSKYAEQRGWKIEVISASEGEHGGYKEIISRIYGDGVYSQLKFESGAHRVQRVPATESQGRIHTSACTVAVMPEADEVEGIDINPADIKVDTFRASGAGGQHVNKTDSAIRITHIPTGVVVECQDQRSQHKNRAAAMLMLKSKLLQAEIDKQQKEQSDTRKSLVGSGDRSERIRTYNYPQGRVTDHRINLTLYKLDEVMEGSLDSIIQPLVLEHQADLLATMSDE</sequence>
<dbReference type="EMBL" id="CP000439">
    <property type="protein sequence ID" value="ABK90409.1"/>
    <property type="molecule type" value="Genomic_DNA"/>
</dbReference>
<dbReference type="RefSeq" id="WP_003040596.1">
    <property type="nucleotide sequence ID" value="NC_008601.1"/>
</dbReference>
<dbReference type="SMR" id="A0Q844"/>
<dbReference type="KEGG" id="ftn:FTN_1545"/>
<dbReference type="KEGG" id="ftx:AW25_453"/>
<dbReference type="BioCyc" id="FTUL401614:G1G75-1597-MONOMER"/>
<dbReference type="Proteomes" id="UP000000762">
    <property type="component" value="Chromosome"/>
</dbReference>
<dbReference type="GO" id="GO:0005737">
    <property type="term" value="C:cytoplasm"/>
    <property type="evidence" value="ECO:0007669"/>
    <property type="project" value="UniProtKB-SubCell"/>
</dbReference>
<dbReference type="GO" id="GO:0016149">
    <property type="term" value="F:translation release factor activity, codon specific"/>
    <property type="evidence" value="ECO:0007669"/>
    <property type="project" value="UniProtKB-UniRule"/>
</dbReference>
<dbReference type="FunFam" id="3.30.160.20:FF:000004">
    <property type="entry name" value="Peptide chain release factor 1"/>
    <property type="match status" value="1"/>
</dbReference>
<dbReference type="FunFam" id="3.30.70.1660:FF:000002">
    <property type="entry name" value="Peptide chain release factor 1"/>
    <property type="match status" value="1"/>
</dbReference>
<dbReference type="FunFam" id="3.30.70.1660:FF:000004">
    <property type="entry name" value="Peptide chain release factor 1"/>
    <property type="match status" value="1"/>
</dbReference>
<dbReference type="Gene3D" id="3.30.160.20">
    <property type="match status" value="1"/>
</dbReference>
<dbReference type="Gene3D" id="3.30.70.1660">
    <property type="match status" value="2"/>
</dbReference>
<dbReference type="Gene3D" id="6.10.140.1950">
    <property type="match status" value="1"/>
</dbReference>
<dbReference type="HAMAP" id="MF_00093">
    <property type="entry name" value="Rel_fac_1"/>
    <property type="match status" value="1"/>
</dbReference>
<dbReference type="InterPro" id="IPR005139">
    <property type="entry name" value="PCRF"/>
</dbReference>
<dbReference type="InterPro" id="IPR000352">
    <property type="entry name" value="Pep_chain_release_fac_I"/>
</dbReference>
<dbReference type="InterPro" id="IPR045853">
    <property type="entry name" value="Pep_chain_release_fac_I_sf"/>
</dbReference>
<dbReference type="InterPro" id="IPR050057">
    <property type="entry name" value="Prokaryotic/Mito_RF"/>
</dbReference>
<dbReference type="InterPro" id="IPR004373">
    <property type="entry name" value="RF-1"/>
</dbReference>
<dbReference type="NCBIfam" id="TIGR00019">
    <property type="entry name" value="prfA"/>
    <property type="match status" value="1"/>
</dbReference>
<dbReference type="NCBIfam" id="NF001859">
    <property type="entry name" value="PRK00591.1"/>
    <property type="match status" value="1"/>
</dbReference>
<dbReference type="PANTHER" id="PTHR43804">
    <property type="entry name" value="LD18447P"/>
    <property type="match status" value="1"/>
</dbReference>
<dbReference type="PANTHER" id="PTHR43804:SF7">
    <property type="entry name" value="LD18447P"/>
    <property type="match status" value="1"/>
</dbReference>
<dbReference type="Pfam" id="PF03462">
    <property type="entry name" value="PCRF"/>
    <property type="match status" value="1"/>
</dbReference>
<dbReference type="Pfam" id="PF00472">
    <property type="entry name" value="RF-1"/>
    <property type="match status" value="1"/>
</dbReference>
<dbReference type="SMART" id="SM00937">
    <property type="entry name" value="PCRF"/>
    <property type="match status" value="1"/>
</dbReference>
<dbReference type="SUPFAM" id="SSF75620">
    <property type="entry name" value="Release factor"/>
    <property type="match status" value="1"/>
</dbReference>
<dbReference type="PROSITE" id="PS00745">
    <property type="entry name" value="RF_PROK_I"/>
    <property type="match status" value="1"/>
</dbReference>
<protein>
    <recommendedName>
        <fullName evidence="1">Peptide chain release factor 1</fullName>
        <shortName evidence="1">RF-1</shortName>
    </recommendedName>
</protein>
<gene>
    <name evidence="1" type="primary">prfA</name>
    <name type="ordered locus">FTN_1545</name>
</gene>
<comment type="function">
    <text evidence="1">Peptide chain release factor 1 directs the termination of translation in response to the peptide chain termination codons UAG and UAA.</text>
</comment>
<comment type="subcellular location">
    <subcellularLocation>
        <location evidence="1">Cytoplasm</location>
    </subcellularLocation>
</comment>
<comment type="PTM">
    <text evidence="1">Methylated by PrmC. Methylation increases the termination efficiency of RF1.</text>
</comment>
<comment type="similarity">
    <text evidence="1">Belongs to the prokaryotic/mitochondrial release factor family.</text>
</comment>